<sequence>MSSNPQYLSGNEIRNTFLNFFAQRSHQILPSASLVPEDPTVLLTIAGMLPFKPIFLGQRTPEFKRATTSQKCIRTNDIENVGRTKRHHTFFEMLGNFSFGDYFKEQAIAWGWEISTQVFGFSPQNLVVSVFEDDDEAFAIWRDQIGVPVARIKRLGEDDNFWVSGPTGPCGPCSEIYYDFHPERGDENIDLEDDSRFIEFYNLVFMQYNRDVLGNLTPLQNKNIDTGMGLERMAQILQKVPNNYETDLIFPIIQTAAQIAGIDYHSSDEKTKVSLKVIGDHVRSVVHMIADEIRASNVGRGYVLRRLIRRVVRHGRLIGISGEFTTQVAESAIALSESAYPNVRQREAAIKAELQREESNFLRTLDRGEKLLEEIIQEVKQQGSTQISGESAFTLYDTYGFPLELTQEVAEENNLTVDAEGFEAQMEIQKGRGRDAHETIDLTVQGSLDKLAEHIQVTEFLGYTQSAATAIIEAILLEGVSQEEAEAGTQVQIVLDKTPFYAESGGQIGDRGYISGDGIVVRVEDVKKESDFFVHFGRIERGTLRVGDRVTAQIDPACRRRAQANHTATHLLQAALKKIVDDGISQAGSLVSFDRLRFDFNCPRALTAEEVQQVEEQVNSWIAEAHAAKVEVLPLAEAKAKGAVAMFGEKYGDEVRVIDFPNVSMELCGGTHVSNTAEIGVFKIISEAGVASGVRRIEAVSGPAILDYLNLRDKVVKDLSDRFKVKPEELPDRITSLQSELRNSQKELETLKVQLAIAKSDSLLQTAETVGDHKIIVAQLENVDPESLKTAAERLLQKIGNGAVVLGSVPEADKVSIVAAFSPEVNKKGLQAGKFVGAIAKICGGGGGGRPNLAQAGGRDASKLPDALGQAESDLKSALA</sequence>
<keyword id="KW-0030">Aminoacyl-tRNA synthetase</keyword>
<keyword id="KW-0067">ATP-binding</keyword>
<keyword id="KW-0963">Cytoplasm</keyword>
<keyword id="KW-0436">Ligase</keyword>
<keyword id="KW-0479">Metal-binding</keyword>
<keyword id="KW-0547">Nucleotide-binding</keyword>
<keyword id="KW-0648">Protein biosynthesis</keyword>
<keyword id="KW-1185">Reference proteome</keyword>
<keyword id="KW-0694">RNA-binding</keyword>
<keyword id="KW-0820">tRNA-binding</keyword>
<keyword id="KW-0862">Zinc</keyword>
<proteinExistence type="inferred from homology"/>
<protein>
    <recommendedName>
        <fullName evidence="1">Alanine--tRNA ligase</fullName>
        <ecNumber evidence="1">6.1.1.7</ecNumber>
    </recommendedName>
    <alternativeName>
        <fullName evidence="1">Alanyl-tRNA synthetase</fullName>
        <shortName evidence="1">AlaRS</shortName>
    </alternativeName>
</protein>
<dbReference type="EC" id="6.1.1.7" evidence="1"/>
<dbReference type="EMBL" id="CP001037">
    <property type="protein sequence ID" value="ACC79325.1"/>
    <property type="molecule type" value="Genomic_DNA"/>
</dbReference>
<dbReference type="RefSeq" id="WP_012407350.1">
    <property type="nucleotide sequence ID" value="NC_010628.1"/>
</dbReference>
<dbReference type="SMR" id="B2J876"/>
<dbReference type="STRING" id="63737.Npun_F0562"/>
<dbReference type="EnsemblBacteria" id="ACC79325">
    <property type="protein sequence ID" value="ACC79325"/>
    <property type="gene ID" value="Npun_F0562"/>
</dbReference>
<dbReference type="KEGG" id="npu:Npun_F0562"/>
<dbReference type="eggNOG" id="COG0013">
    <property type="taxonomic scope" value="Bacteria"/>
</dbReference>
<dbReference type="HOGENOM" id="CLU_004485_1_1_3"/>
<dbReference type="OrthoDB" id="9803884at2"/>
<dbReference type="PhylomeDB" id="B2J876"/>
<dbReference type="Proteomes" id="UP000001191">
    <property type="component" value="Chromosome"/>
</dbReference>
<dbReference type="GO" id="GO:0005829">
    <property type="term" value="C:cytosol"/>
    <property type="evidence" value="ECO:0007669"/>
    <property type="project" value="TreeGrafter"/>
</dbReference>
<dbReference type="GO" id="GO:0004813">
    <property type="term" value="F:alanine-tRNA ligase activity"/>
    <property type="evidence" value="ECO:0007669"/>
    <property type="project" value="UniProtKB-UniRule"/>
</dbReference>
<dbReference type="GO" id="GO:0002161">
    <property type="term" value="F:aminoacyl-tRNA deacylase activity"/>
    <property type="evidence" value="ECO:0007669"/>
    <property type="project" value="TreeGrafter"/>
</dbReference>
<dbReference type="GO" id="GO:0005524">
    <property type="term" value="F:ATP binding"/>
    <property type="evidence" value="ECO:0007669"/>
    <property type="project" value="UniProtKB-UniRule"/>
</dbReference>
<dbReference type="GO" id="GO:0000049">
    <property type="term" value="F:tRNA binding"/>
    <property type="evidence" value="ECO:0007669"/>
    <property type="project" value="UniProtKB-KW"/>
</dbReference>
<dbReference type="GO" id="GO:0008270">
    <property type="term" value="F:zinc ion binding"/>
    <property type="evidence" value="ECO:0007669"/>
    <property type="project" value="UniProtKB-UniRule"/>
</dbReference>
<dbReference type="GO" id="GO:0006419">
    <property type="term" value="P:alanyl-tRNA aminoacylation"/>
    <property type="evidence" value="ECO:0007669"/>
    <property type="project" value="UniProtKB-UniRule"/>
</dbReference>
<dbReference type="CDD" id="cd00673">
    <property type="entry name" value="AlaRS_core"/>
    <property type="match status" value="1"/>
</dbReference>
<dbReference type="FunFam" id="2.40.30.130:FF:000001">
    <property type="entry name" value="Alanine--tRNA ligase"/>
    <property type="match status" value="1"/>
</dbReference>
<dbReference type="FunFam" id="3.10.310.40:FF:000001">
    <property type="entry name" value="Alanine--tRNA ligase"/>
    <property type="match status" value="1"/>
</dbReference>
<dbReference type="FunFam" id="3.30.54.20:FF:000001">
    <property type="entry name" value="Alanine--tRNA ligase"/>
    <property type="match status" value="1"/>
</dbReference>
<dbReference type="FunFam" id="3.30.930.10:FF:000004">
    <property type="entry name" value="Alanine--tRNA ligase"/>
    <property type="match status" value="1"/>
</dbReference>
<dbReference type="FunFam" id="3.30.980.10:FF:000004">
    <property type="entry name" value="Alanine--tRNA ligase, cytoplasmic"/>
    <property type="match status" value="1"/>
</dbReference>
<dbReference type="Gene3D" id="2.40.30.130">
    <property type="match status" value="1"/>
</dbReference>
<dbReference type="Gene3D" id="3.10.310.40">
    <property type="match status" value="1"/>
</dbReference>
<dbReference type="Gene3D" id="3.30.54.20">
    <property type="match status" value="1"/>
</dbReference>
<dbReference type="Gene3D" id="6.10.250.550">
    <property type="match status" value="1"/>
</dbReference>
<dbReference type="Gene3D" id="3.30.930.10">
    <property type="entry name" value="Bira Bifunctional Protein, Domain 2"/>
    <property type="match status" value="1"/>
</dbReference>
<dbReference type="Gene3D" id="3.30.980.10">
    <property type="entry name" value="Threonyl-trna Synthetase, Chain A, domain 2"/>
    <property type="match status" value="1"/>
</dbReference>
<dbReference type="HAMAP" id="MF_00036_B">
    <property type="entry name" value="Ala_tRNA_synth_B"/>
    <property type="match status" value="1"/>
</dbReference>
<dbReference type="InterPro" id="IPR045864">
    <property type="entry name" value="aa-tRNA-synth_II/BPL/LPL"/>
</dbReference>
<dbReference type="InterPro" id="IPR002318">
    <property type="entry name" value="Ala-tRNA-lgiase_IIc"/>
</dbReference>
<dbReference type="InterPro" id="IPR018162">
    <property type="entry name" value="Ala-tRNA-ligase_IIc_anticod-bd"/>
</dbReference>
<dbReference type="InterPro" id="IPR018165">
    <property type="entry name" value="Ala-tRNA-synth_IIc_core"/>
</dbReference>
<dbReference type="InterPro" id="IPR018164">
    <property type="entry name" value="Ala-tRNA-synth_IIc_N"/>
</dbReference>
<dbReference type="InterPro" id="IPR050058">
    <property type="entry name" value="Ala-tRNA_ligase"/>
</dbReference>
<dbReference type="InterPro" id="IPR023033">
    <property type="entry name" value="Ala_tRNA_ligase_euk/bac"/>
</dbReference>
<dbReference type="InterPro" id="IPR003156">
    <property type="entry name" value="DHHA1_dom"/>
</dbReference>
<dbReference type="InterPro" id="IPR018163">
    <property type="entry name" value="Thr/Ala-tRNA-synth_IIc_edit"/>
</dbReference>
<dbReference type="InterPro" id="IPR009000">
    <property type="entry name" value="Transl_B-barrel_sf"/>
</dbReference>
<dbReference type="InterPro" id="IPR012947">
    <property type="entry name" value="tRNA_SAD"/>
</dbReference>
<dbReference type="NCBIfam" id="TIGR00344">
    <property type="entry name" value="alaS"/>
    <property type="match status" value="1"/>
</dbReference>
<dbReference type="PANTHER" id="PTHR11777:SF9">
    <property type="entry name" value="ALANINE--TRNA LIGASE, CYTOPLASMIC"/>
    <property type="match status" value="1"/>
</dbReference>
<dbReference type="PANTHER" id="PTHR11777">
    <property type="entry name" value="ALANYL-TRNA SYNTHETASE"/>
    <property type="match status" value="1"/>
</dbReference>
<dbReference type="Pfam" id="PF02272">
    <property type="entry name" value="DHHA1"/>
    <property type="match status" value="1"/>
</dbReference>
<dbReference type="Pfam" id="PF01411">
    <property type="entry name" value="tRNA-synt_2c"/>
    <property type="match status" value="1"/>
</dbReference>
<dbReference type="Pfam" id="PF07973">
    <property type="entry name" value="tRNA_SAD"/>
    <property type="match status" value="1"/>
</dbReference>
<dbReference type="PRINTS" id="PR00980">
    <property type="entry name" value="TRNASYNTHALA"/>
</dbReference>
<dbReference type="SMART" id="SM00863">
    <property type="entry name" value="tRNA_SAD"/>
    <property type="match status" value="1"/>
</dbReference>
<dbReference type="SUPFAM" id="SSF55681">
    <property type="entry name" value="Class II aaRS and biotin synthetases"/>
    <property type="match status" value="1"/>
</dbReference>
<dbReference type="SUPFAM" id="SSF101353">
    <property type="entry name" value="Putative anticodon-binding domain of alanyl-tRNA synthetase (AlaRS)"/>
    <property type="match status" value="1"/>
</dbReference>
<dbReference type="SUPFAM" id="SSF55186">
    <property type="entry name" value="ThrRS/AlaRS common domain"/>
    <property type="match status" value="1"/>
</dbReference>
<dbReference type="SUPFAM" id="SSF50447">
    <property type="entry name" value="Translation proteins"/>
    <property type="match status" value="1"/>
</dbReference>
<dbReference type="PROSITE" id="PS50860">
    <property type="entry name" value="AA_TRNA_LIGASE_II_ALA"/>
    <property type="match status" value="1"/>
</dbReference>
<name>SYA_NOSP7</name>
<evidence type="ECO:0000255" key="1">
    <source>
        <dbReference type="HAMAP-Rule" id="MF_00036"/>
    </source>
</evidence>
<feature type="chain" id="PRO_0000347704" description="Alanine--tRNA ligase">
    <location>
        <begin position="1"/>
        <end position="880"/>
    </location>
</feature>
<feature type="binding site" evidence="1">
    <location>
        <position position="566"/>
    </location>
    <ligand>
        <name>Zn(2+)</name>
        <dbReference type="ChEBI" id="CHEBI:29105"/>
    </ligand>
</feature>
<feature type="binding site" evidence="1">
    <location>
        <position position="570"/>
    </location>
    <ligand>
        <name>Zn(2+)</name>
        <dbReference type="ChEBI" id="CHEBI:29105"/>
    </ligand>
</feature>
<feature type="binding site" evidence="1">
    <location>
        <position position="668"/>
    </location>
    <ligand>
        <name>Zn(2+)</name>
        <dbReference type="ChEBI" id="CHEBI:29105"/>
    </ligand>
</feature>
<feature type="binding site" evidence="1">
    <location>
        <position position="672"/>
    </location>
    <ligand>
        <name>Zn(2+)</name>
        <dbReference type="ChEBI" id="CHEBI:29105"/>
    </ligand>
</feature>
<accession>B2J876</accession>
<gene>
    <name evidence="1" type="primary">alaS</name>
    <name type="ordered locus">Npun_F0562</name>
</gene>
<organism>
    <name type="scientific">Nostoc punctiforme (strain ATCC 29133 / PCC 73102)</name>
    <dbReference type="NCBI Taxonomy" id="63737"/>
    <lineage>
        <taxon>Bacteria</taxon>
        <taxon>Bacillati</taxon>
        <taxon>Cyanobacteriota</taxon>
        <taxon>Cyanophyceae</taxon>
        <taxon>Nostocales</taxon>
        <taxon>Nostocaceae</taxon>
        <taxon>Nostoc</taxon>
    </lineage>
</organism>
<reference key="1">
    <citation type="journal article" date="2013" name="Plant Physiol.">
        <title>A Nostoc punctiforme Sugar Transporter Necessary to Establish a Cyanobacterium-Plant Symbiosis.</title>
        <authorList>
            <person name="Ekman M."/>
            <person name="Picossi S."/>
            <person name="Campbell E.L."/>
            <person name="Meeks J.C."/>
            <person name="Flores E."/>
        </authorList>
    </citation>
    <scope>NUCLEOTIDE SEQUENCE [LARGE SCALE GENOMIC DNA]</scope>
    <source>
        <strain>ATCC 29133 / PCC 73102</strain>
    </source>
</reference>
<comment type="function">
    <text evidence="1">Catalyzes the attachment of alanine to tRNA(Ala) in a two-step reaction: alanine is first activated by ATP to form Ala-AMP and then transferred to the acceptor end of tRNA(Ala). Also edits incorrectly charged Ser-tRNA(Ala) and Gly-tRNA(Ala) via its editing domain.</text>
</comment>
<comment type="catalytic activity">
    <reaction evidence="1">
        <text>tRNA(Ala) + L-alanine + ATP = L-alanyl-tRNA(Ala) + AMP + diphosphate</text>
        <dbReference type="Rhea" id="RHEA:12540"/>
        <dbReference type="Rhea" id="RHEA-COMP:9657"/>
        <dbReference type="Rhea" id="RHEA-COMP:9923"/>
        <dbReference type="ChEBI" id="CHEBI:30616"/>
        <dbReference type="ChEBI" id="CHEBI:33019"/>
        <dbReference type="ChEBI" id="CHEBI:57972"/>
        <dbReference type="ChEBI" id="CHEBI:78442"/>
        <dbReference type="ChEBI" id="CHEBI:78497"/>
        <dbReference type="ChEBI" id="CHEBI:456215"/>
        <dbReference type="EC" id="6.1.1.7"/>
    </reaction>
</comment>
<comment type="cofactor">
    <cofactor evidence="1">
        <name>Zn(2+)</name>
        <dbReference type="ChEBI" id="CHEBI:29105"/>
    </cofactor>
    <text evidence="1">Binds 1 zinc ion per subunit.</text>
</comment>
<comment type="subcellular location">
    <subcellularLocation>
        <location evidence="1">Cytoplasm</location>
    </subcellularLocation>
</comment>
<comment type="domain">
    <text evidence="1">Consists of three domains; the N-terminal catalytic domain, the editing domain and the C-terminal C-Ala domain. The editing domain removes incorrectly charged amino acids, while the C-Ala domain, along with tRNA(Ala), serves as a bridge to cooperatively bring together the editing and aminoacylation centers thus stimulating deacylation of misacylated tRNAs.</text>
</comment>
<comment type="similarity">
    <text evidence="1">Belongs to the class-II aminoacyl-tRNA synthetase family.</text>
</comment>